<proteinExistence type="inferred from homology"/>
<comment type="function">
    <text evidence="1">Essential for recycling GMP and indirectly, cGMP.</text>
</comment>
<comment type="catalytic activity">
    <reaction evidence="1">
        <text>GMP + ATP = GDP + ADP</text>
        <dbReference type="Rhea" id="RHEA:20780"/>
        <dbReference type="ChEBI" id="CHEBI:30616"/>
        <dbReference type="ChEBI" id="CHEBI:58115"/>
        <dbReference type="ChEBI" id="CHEBI:58189"/>
        <dbReference type="ChEBI" id="CHEBI:456216"/>
        <dbReference type="EC" id="2.7.4.8"/>
    </reaction>
</comment>
<comment type="subcellular location">
    <subcellularLocation>
        <location evidence="1">Cytoplasm</location>
    </subcellularLocation>
</comment>
<comment type="similarity">
    <text evidence="1">Belongs to the guanylate kinase family.</text>
</comment>
<comment type="sequence caution" evidence="2">
    <conflict type="erroneous initiation">
        <sequence resource="EMBL-CDS" id="CAE41867"/>
    </conflict>
</comment>
<name>KGUA_BORPE</name>
<protein>
    <recommendedName>
        <fullName evidence="1">Guanylate kinase</fullName>
        <ecNumber evidence="1">2.7.4.8</ecNumber>
    </recommendedName>
    <alternativeName>
        <fullName evidence="1">GMP kinase</fullName>
    </alternativeName>
</protein>
<accession>Q7VXZ3</accession>
<sequence length="215" mass="23681">MSFLSMSAPSGNVFMVVAPSGAGKSSLVRALLDRDPSLVLSISCTTRAPRPGEQDGREYRFVDQAEFARLRDAQQLLEWAEVHGNFYGTPRDRIDEATRAGHDVLLEIDWQGARQVKQRYPEAIGIFVLPPSIDELESRLKARGQDAPQVIARRLLAAGGEIAHAPECEYVIINQEFSVALTELVQIISAARLRFSSQAVRNAQLFSQLGIPAAH</sequence>
<dbReference type="EC" id="2.7.4.8" evidence="1"/>
<dbReference type="EMBL" id="BX640415">
    <property type="protein sequence ID" value="CAE41867.1"/>
    <property type="status" value="ALT_INIT"/>
    <property type="molecule type" value="Genomic_DNA"/>
</dbReference>
<dbReference type="RefSeq" id="NP_880311.1">
    <property type="nucleotide sequence ID" value="NC_002929.2"/>
</dbReference>
<dbReference type="SMR" id="Q7VXZ3"/>
<dbReference type="STRING" id="257313.BP1578"/>
<dbReference type="PaxDb" id="257313-BP1578"/>
<dbReference type="KEGG" id="bpe:BP1578"/>
<dbReference type="PATRIC" id="fig|257313.5.peg.1694"/>
<dbReference type="eggNOG" id="COG0194">
    <property type="taxonomic scope" value="Bacteria"/>
</dbReference>
<dbReference type="HOGENOM" id="CLU_001715_1_0_4"/>
<dbReference type="Proteomes" id="UP000002676">
    <property type="component" value="Chromosome"/>
</dbReference>
<dbReference type="GO" id="GO:0005829">
    <property type="term" value="C:cytosol"/>
    <property type="evidence" value="ECO:0007669"/>
    <property type="project" value="TreeGrafter"/>
</dbReference>
<dbReference type="GO" id="GO:0005524">
    <property type="term" value="F:ATP binding"/>
    <property type="evidence" value="ECO:0007669"/>
    <property type="project" value="UniProtKB-UniRule"/>
</dbReference>
<dbReference type="GO" id="GO:0004385">
    <property type="term" value="F:guanylate kinase activity"/>
    <property type="evidence" value="ECO:0007669"/>
    <property type="project" value="UniProtKB-UniRule"/>
</dbReference>
<dbReference type="CDD" id="cd00071">
    <property type="entry name" value="GMPK"/>
    <property type="match status" value="1"/>
</dbReference>
<dbReference type="FunFam" id="3.30.63.10:FF:000005">
    <property type="entry name" value="Guanylate kinase"/>
    <property type="match status" value="1"/>
</dbReference>
<dbReference type="Gene3D" id="3.30.63.10">
    <property type="entry name" value="Guanylate Kinase phosphate binding domain"/>
    <property type="match status" value="1"/>
</dbReference>
<dbReference type="Gene3D" id="3.40.50.300">
    <property type="entry name" value="P-loop containing nucleotide triphosphate hydrolases"/>
    <property type="match status" value="1"/>
</dbReference>
<dbReference type="HAMAP" id="MF_00328">
    <property type="entry name" value="Guanylate_kinase"/>
    <property type="match status" value="1"/>
</dbReference>
<dbReference type="InterPro" id="IPR008145">
    <property type="entry name" value="GK/Ca_channel_bsu"/>
</dbReference>
<dbReference type="InterPro" id="IPR008144">
    <property type="entry name" value="Guanylate_kin-like_dom"/>
</dbReference>
<dbReference type="InterPro" id="IPR017665">
    <property type="entry name" value="Guanylate_kinase"/>
</dbReference>
<dbReference type="InterPro" id="IPR020590">
    <property type="entry name" value="Guanylate_kinase_CS"/>
</dbReference>
<dbReference type="InterPro" id="IPR027417">
    <property type="entry name" value="P-loop_NTPase"/>
</dbReference>
<dbReference type="NCBIfam" id="TIGR03263">
    <property type="entry name" value="guanyl_kin"/>
    <property type="match status" value="1"/>
</dbReference>
<dbReference type="PANTHER" id="PTHR23117:SF13">
    <property type="entry name" value="GUANYLATE KINASE"/>
    <property type="match status" value="1"/>
</dbReference>
<dbReference type="PANTHER" id="PTHR23117">
    <property type="entry name" value="GUANYLATE KINASE-RELATED"/>
    <property type="match status" value="1"/>
</dbReference>
<dbReference type="Pfam" id="PF00625">
    <property type="entry name" value="Guanylate_kin"/>
    <property type="match status" value="1"/>
</dbReference>
<dbReference type="SMART" id="SM00072">
    <property type="entry name" value="GuKc"/>
    <property type="match status" value="1"/>
</dbReference>
<dbReference type="SUPFAM" id="SSF52540">
    <property type="entry name" value="P-loop containing nucleoside triphosphate hydrolases"/>
    <property type="match status" value="1"/>
</dbReference>
<dbReference type="PROSITE" id="PS00856">
    <property type="entry name" value="GUANYLATE_KINASE_1"/>
    <property type="match status" value="1"/>
</dbReference>
<dbReference type="PROSITE" id="PS50052">
    <property type="entry name" value="GUANYLATE_KINASE_2"/>
    <property type="match status" value="1"/>
</dbReference>
<keyword id="KW-0067">ATP-binding</keyword>
<keyword id="KW-0963">Cytoplasm</keyword>
<keyword id="KW-0418">Kinase</keyword>
<keyword id="KW-0547">Nucleotide-binding</keyword>
<keyword id="KW-1185">Reference proteome</keyword>
<keyword id="KW-0808">Transferase</keyword>
<evidence type="ECO:0000255" key="1">
    <source>
        <dbReference type="HAMAP-Rule" id="MF_00328"/>
    </source>
</evidence>
<evidence type="ECO:0000305" key="2"/>
<gene>
    <name evidence="1" type="primary">gmk</name>
    <name type="ordered locus">BP1578</name>
</gene>
<reference key="1">
    <citation type="journal article" date="2003" name="Nat. Genet.">
        <title>Comparative analysis of the genome sequences of Bordetella pertussis, Bordetella parapertussis and Bordetella bronchiseptica.</title>
        <authorList>
            <person name="Parkhill J."/>
            <person name="Sebaihia M."/>
            <person name="Preston A."/>
            <person name="Murphy L.D."/>
            <person name="Thomson N.R."/>
            <person name="Harris D.E."/>
            <person name="Holden M.T.G."/>
            <person name="Churcher C.M."/>
            <person name="Bentley S.D."/>
            <person name="Mungall K.L."/>
            <person name="Cerdeno-Tarraga A.-M."/>
            <person name="Temple L."/>
            <person name="James K.D."/>
            <person name="Harris B."/>
            <person name="Quail M.A."/>
            <person name="Achtman M."/>
            <person name="Atkin R."/>
            <person name="Baker S."/>
            <person name="Basham D."/>
            <person name="Bason N."/>
            <person name="Cherevach I."/>
            <person name="Chillingworth T."/>
            <person name="Collins M."/>
            <person name="Cronin A."/>
            <person name="Davis P."/>
            <person name="Doggett J."/>
            <person name="Feltwell T."/>
            <person name="Goble A."/>
            <person name="Hamlin N."/>
            <person name="Hauser H."/>
            <person name="Holroyd S."/>
            <person name="Jagels K."/>
            <person name="Leather S."/>
            <person name="Moule S."/>
            <person name="Norberczak H."/>
            <person name="O'Neil S."/>
            <person name="Ormond D."/>
            <person name="Price C."/>
            <person name="Rabbinowitsch E."/>
            <person name="Rutter S."/>
            <person name="Sanders M."/>
            <person name="Saunders D."/>
            <person name="Seeger K."/>
            <person name="Sharp S."/>
            <person name="Simmonds M."/>
            <person name="Skelton J."/>
            <person name="Squares R."/>
            <person name="Squares S."/>
            <person name="Stevens K."/>
            <person name="Unwin L."/>
            <person name="Whitehead S."/>
            <person name="Barrell B.G."/>
            <person name="Maskell D.J."/>
        </authorList>
    </citation>
    <scope>NUCLEOTIDE SEQUENCE [LARGE SCALE GENOMIC DNA]</scope>
    <source>
        <strain>Tohama I / ATCC BAA-589 / NCTC 13251</strain>
    </source>
</reference>
<organism>
    <name type="scientific">Bordetella pertussis (strain Tohama I / ATCC BAA-589 / NCTC 13251)</name>
    <dbReference type="NCBI Taxonomy" id="257313"/>
    <lineage>
        <taxon>Bacteria</taxon>
        <taxon>Pseudomonadati</taxon>
        <taxon>Pseudomonadota</taxon>
        <taxon>Betaproteobacteria</taxon>
        <taxon>Burkholderiales</taxon>
        <taxon>Alcaligenaceae</taxon>
        <taxon>Bordetella</taxon>
    </lineage>
</organism>
<feature type="chain" id="PRO_0000170506" description="Guanylate kinase">
    <location>
        <begin position="1"/>
        <end position="215"/>
    </location>
</feature>
<feature type="domain" description="Guanylate kinase-like" evidence="1">
    <location>
        <begin position="11"/>
        <end position="189"/>
    </location>
</feature>
<feature type="binding site" evidence="1">
    <location>
        <begin position="18"/>
        <end position="25"/>
    </location>
    <ligand>
        <name>ATP</name>
        <dbReference type="ChEBI" id="CHEBI:30616"/>
    </ligand>
</feature>